<reference key="1">
    <citation type="journal article" date="2005" name="Nature">
        <title>The map-based sequence of the rice genome.</title>
        <authorList>
            <consortium name="International rice genome sequencing project (IRGSP)"/>
        </authorList>
    </citation>
    <scope>NUCLEOTIDE SEQUENCE [LARGE SCALE GENOMIC DNA]</scope>
    <source>
        <strain>cv. Nipponbare</strain>
    </source>
</reference>
<reference key="2">
    <citation type="journal article" date="2008" name="Nucleic Acids Res.">
        <title>The rice annotation project database (RAP-DB): 2008 update.</title>
        <authorList>
            <consortium name="The rice annotation project (RAP)"/>
        </authorList>
    </citation>
    <scope>GENOME REANNOTATION</scope>
    <source>
        <strain>cv. Nipponbare</strain>
    </source>
</reference>
<reference key="3">
    <citation type="journal article" date="2013" name="Rice">
        <title>Improvement of the Oryza sativa Nipponbare reference genome using next generation sequence and optical map data.</title>
        <authorList>
            <person name="Kawahara Y."/>
            <person name="de la Bastide M."/>
            <person name="Hamilton J.P."/>
            <person name="Kanamori H."/>
            <person name="McCombie W.R."/>
            <person name="Ouyang S."/>
            <person name="Schwartz D.C."/>
            <person name="Tanaka T."/>
            <person name="Wu J."/>
            <person name="Zhou S."/>
            <person name="Childs K.L."/>
            <person name="Davidson R.M."/>
            <person name="Lin H."/>
            <person name="Quesada-Ocampo L."/>
            <person name="Vaillancourt B."/>
            <person name="Sakai H."/>
            <person name="Lee S.S."/>
            <person name="Kim J."/>
            <person name="Numa H."/>
            <person name="Itoh T."/>
            <person name="Buell C.R."/>
            <person name="Matsumoto T."/>
        </authorList>
    </citation>
    <scope>GENOME REANNOTATION</scope>
    <source>
        <strain>cv. Nipponbare</strain>
    </source>
</reference>
<reference key="4">
    <citation type="journal article" date="2010" name="Nature">
        <title>Sugar transporters for intercellular exchange and nutrition of pathogens.</title>
        <authorList>
            <person name="Chen L.-Q."/>
            <person name="Hou B.-H."/>
            <person name="Lalonde S."/>
            <person name="Takanaga H."/>
            <person name="Hartung M.L."/>
            <person name="Qu X.-Q."/>
            <person name="Guo W.-J."/>
            <person name="Kim J.-G."/>
            <person name="Underwood W."/>
            <person name="Chaudhuri B."/>
            <person name="Chermak D."/>
            <person name="Antony G."/>
            <person name="White F.F."/>
            <person name="Somerville S.C."/>
            <person name="Mudgett M.B."/>
            <person name="Frommer W.B."/>
        </authorList>
    </citation>
    <scope>GENE FAMILY</scope>
    <scope>NOMENCLATURE</scope>
</reference>
<keyword id="KW-1003">Cell membrane</keyword>
<keyword id="KW-0472">Membrane</keyword>
<keyword id="KW-1185">Reference proteome</keyword>
<keyword id="KW-0677">Repeat</keyword>
<keyword id="KW-0762">Sugar transport</keyword>
<keyword id="KW-0812">Transmembrane</keyword>
<keyword id="KW-1133">Transmembrane helix</keyword>
<keyword id="KW-0813">Transport</keyword>
<dbReference type="EMBL" id="AP008215">
    <property type="protein sequence ID" value="BAF24616.1"/>
    <property type="status" value="ALT_SEQ"/>
    <property type="molecule type" value="Genomic_DNA"/>
</dbReference>
<dbReference type="EMBL" id="AP014965">
    <property type="status" value="NOT_ANNOTATED_CDS"/>
    <property type="molecule type" value="Genomic_DNA"/>
</dbReference>
<dbReference type="RefSeq" id="XP_015611083.1">
    <property type="nucleotide sequence ID" value="XM_015755597.1"/>
</dbReference>
<dbReference type="SMR" id="Q0J349"/>
<dbReference type="FunCoup" id="Q0J349">
    <property type="interactions" value="298"/>
</dbReference>
<dbReference type="PaxDb" id="39947-Q0J349"/>
<dbReference type="KEGG" id="dosa:Os09g0258700"/>
<dbReference type="HOGENOM" id="CLU_048643_1_0_1"/>
<dbReference type="InParanoid" id="Q0J349"/>
<dbReference type="OrthoDB" id="409725at2759"/>
<dbReference type="Proteomes" id="UP000000763">
    <property type="component" value="Chromosome 9"/>
</dbReference>
<dbReference type="Proteomes" id="UP000059680">
    <property type="component" value="Chromosome 9"/>
</dbReference>
<dbReference type="GO" id="GO:0016020">
    <property type="term" value="C:membrane"/>
    <property type="evidence" value="ECO:0000318"/>
    <property type="project" value="GO_Central"/>
</dbReference>
<dbReference type="GO" id="GO:0005886">
    <property type="term" value="C:plasma membrane"/>
    <property type="evidence" value="ECO:0000250"/>
    <property type="project" value="UniProtKB"/>
</dbReference>
<dbReference type="GO" id="GO:0051119">
    <property type="term" value="F:sugar transmembrane transporter activity"/>
    <property type="evidence" value="ECO:0000250"/>
    <property type="project" value="UniProtKB"/>
</dbReference>
<dbReference type="GO" id="GO:0008643">
    <property type="term" value="P:carbohydrate transport"/>
    <property type="evidence" value="ECO:0000318"/>
    <property type="project" value="GO_Central"/>
</dbReference>
<dbReference type="FunFam" id="1.20.1280.290:FF:000001">
    <property type="entry name" value="Bidirectional sugar transporter SWEET"/>
    <property type="match status" value="1"/>
</dbReference>
<dbReference type="FunFam" id="1.20.1280.290:FF:000002">
    <property type="entry name" value="Bidirectional sugar transporter SWEET"/>
    <property type="match status" value="1"/>
</dbReference>
<dbReference type="Gene3D" id="1.20.1280.290">
    <property type="match status" value="2"/>
</dbReference>
<dbReference type="InterPro" id="IPR047664">
    <property type="entry name" value="SWEET"/>
</dbReference>
<dbReference type="InterPro" id="IPR004316">
    <property type="entry name" value="SWEET_rpt"/>
</dbReference>
<dbReference type="PANTHER" id="PTHR10791">
    <property type="entry name" value="RAG1-ACTIVATING PROTEIN 1"/>
    <property type="match status" value="1"/>
</dbReference>
<dbReference type="PANTHER" id="PTHR10791:SF30">
    <property type="entry name" value="SUGAR TRANSPORTER SWEET1"/>
    <property type="match status" value="1"/>
</dbReference>
<dbReference type="Pfam" id="PF03083">
    <property type="entry name" value="MtN3_slv"/>
    <property type="match status" value="2"/>
</dbReference>
<sequence>MVSPDLIRNMVGIVGNIISFGLFLSPVPTFYRIIKNKDVQDFKADPYLATLLNCMLWVFYGLPIVHPNSILVVTINGIGLVIEAVYLTIFFLFSDKKNKKKMGVVLATEALFMAAVVLGVLLGAHTHQRRSLIVGILCVIFGTIMYSSPLTIMSQVVKTKSVEYMPLLLSVVSFLNGLCWTSYALIRLDIFITIPNGLGVLFALMQLILYAIYYRTIPKKQDKNLELPTVAPVAKDTSIVTPVSKDDDVDGGNASHVTINITIEL</sequence>
<evidence type="ECO:0000250" key="1">
    <source>
        <dbReference type="UniProtKB" id="Q8L9J7"/>
    </source>
</evidence>
<evidence type="ECO:0000255" key="2"/>
<evidence type="ECO:0000305" key="3"/>
<proteinExistence type="inferred from homology"/>
<gene>
    <name type="primary">SWEET7B</name>
    <name type="ordered locus">Os09g0258700</name>
    <name type="ordered locus">LOC_Os09g08440</name>
</gene>
<protein>
    <recommendedName>
        <fullName>Bidirectional sugar transporter SWEET7b</fullName>
        <shortName>OsSWEET7b</shortName>
    </recommendedName>
</protein>
<organism>
    <name type="scientific">Oryza sativa subsp. japonica</name>
    <name type="common">Rice</name>
    <dbReference type="NCBI Taxonomy" id="39947"/>
    <lineage>
        <taxon>Eukaryota</taxon>
        <taxon>Viridiplantae</taxon>
        <taxon>Streptophyta</taxon>
        <taxon>Embryophyta</taxon>
        <taxon>Tracheophyta</taxon>
        <taxon>Spermatophyta</taxon>
        <taxon>Magnoliopsida</taxon>
        <taxon>Liliopsida</taxon>
        <taxon>Poales</taxon>
        <taxon>Poaceae</taxon>
        <taxon>BOP clade</taxon>
        <taxon>Oryzoideae</taxon>
        <taxon>Oryzeae</taxon>
        <taxon>Oryzinae</taxon>
        <taxon>Oryza</taxon>
        <taxon>Oryza sativa</taxon>
    </lineage>
</organism>
<name>SWT7B_ORYSJ</name>
<feature type="chain" id="PRO_0000404129" description="Bidirectional sugar transporter SWEET7b">
    <location>
        <begin position="1"/>
        <end position="265"/>
    </location>
</feature>
<feature type="topological domain" description="Extracellular" evidence="2">
    <location>
        <begin position="1"/>
        <end position="9"/>
    </location>
</feature>
<feature type="transmembrane region" description="Helical; Name=1" evidence="2">
    <location>
        <begin position="10"/>
        <end position="30"/>
    </location>
</feature>
<feature type="topological domain" description="Cytoplasmic" evidence="2">
    <location>
        <begin position="31"/>
        <end position="45"/>
    </location>
</feature>
<feature type="transmembrane region" description="Helical; Name=2" evidence="2">
    <location>
        <begin position="46"/>
        <end position="66"/>
    </location>
</feature>
<feature type="topological domain" description="Extracellular" evidence="2">
    <location>
        <begin position="67"/>
        <end position="69"/>
    </location>
</feature>
<feature type="transmembrane region" description="Helical; Name=3" evidence="2">
    <location>
        <begin position="70"/>
        <end position="90"/>
    </location>
</feature>
<feature type="topological domain" description="Cytoplasmic" evidence="2">
    <location>
        <begin position="91"/>
        <end position="101"/>
    </location>
</feature>
<feature type="transmembrane region" description="Helical; Name=4" evidence="2">
    <location>
        <begin position="102"/>
        <end position="122"/>
    </location>
</feature>
<feature type="topological domain" description="Extracellular" evidence="2">
    <location>
        <begin position="123"/>
        <end position="131"/>
    </location>
</feature>
<feature type="transmembrane region" description="Helical; Name=5" evidence="2">
    <location>
        <begin position="132"/>
        <end position="152"/>
    </location>
</feature>
<feature type="topological domain" description="Cytoplasmic" evidence="2">
    <location>
        <begin position="153"/>
        <end position="165"/>
    </location>
</feature>
<feature type="transmembrane region" description="Helical; Name=6" evidence="2">
    <location>
        <begin position="166"/>
        <end position="186"/>
    </location>
</feature>
<feature type="topological domain" description="Extracellular" evidence="2">
    <location>
        <begin position="187"/>
        <end position="189"/>
    </location>
</feature>
<feature type="transmembrane region" description="Helical; Name=7" evidence="2">
    <location>
        <begin position="190"/>
        <end position="210"/>
    </location>
</feature>
<feature type="topological domain" description="Cytoplasmic" evidence="2">
    <location>
        <begin position="211"/>
        <end position="265"/>
    </location>
</feature>
<feature type="domain" description="MtN3/slv 1">
    <location>
        <begin position="10"/>
        <end position="97"/>
    </location>
</feature>
<feature type="domain" description="MtN3/slv 2">
    <location>
        <begin position="133"/>
        <end position="215"/>
    </location>
</feature>
<comment type="function">
    <text evidence="1">Mediates both low-affinity uptake and efflux of sugar across the plasma membrane.</text>
</comment>
<comment type="subunit">
    <text evidence="1">Forms homooligomers and/or heterooligomers.</text>
</comment>
<comment type="subcellular location">
    <subcellularLocation>
        <location evidence="1">Cell membrane</location>
        <topology evidence="1">Multi-pass membrane protein</topology>
    </subcellularLocation>
</comment>
<comment type="similarity">
    <text evidence="3">Belongs to the SWEET sugar transporter family.</text>
</comment>
<comment type="sequence caution" evidence="3">
    <conflict type="erroneous gene model prediction">
        <sequence resource="EMBL-CDS" id="BAF24616"/>
    </conflict>
</comment>
<comment type="sequence caution" evidence="3">
    <conflict type="frameshift">
        <sequence resource="EMBL-CDS" id="BAF24616"/>
    </conflict>
</comment>
<accession>Q0J349</accession>